<accession>Q5VU65</accession>
<accession>E7EP56</accession>
<accession>Q5T4L7</accession>
<accession>Q6ZRN1</accession>
<accession>Q6ZRT4</accession>
<accession>Q6ZU81</accession>
<accession>Q8NDI6</accession>
<accession>Q9UF31</accession>
<protein>
    <recommendedName>
        <fullName>Nuclear pore membrane glycoprotein 210-like</fullName>
    </recommendedName>
    <alternativeName>
        <fullName>Nucleoporin 210 kDa-like</fullName>
    </alternativeName>
    <alternativeName>
        <fullName>Nucleoporin Nup210-like</fullName>
    </alternativeName>
</protein>
<reference key="1">
    <citation type="journal article" date="2004" name="Nat. Genet.">
        <title>Complete sequencing and characterization of 21,243 full-length human cDNAs.</title>
        <authorList>
            <person name="Ota T."/>
            <person name="Suzuki Y."/>
            <person name="Nishikawa T."/>
            <person name="Otsuki T."/>
            <person name="Sugiyama T."/>
            <person name="Irie R."/>
            <person name="Wakamatsu A."/>
            <person name="Hayashi K."/>
            <person name="Sato H."/>
            <person name="Nagai K."/>
            <person name="Kimura K."/>
            <person name="Makita H."/>
            <person name="Sekine M."/>
            <person name="Obayashi M."/>
            <person name="Nishi T."/>
            <person name="Shibahara T."/>
            <person name="Tanaka T."/>
            <person name="Ishii S."/>
            <person name="Yamamoto J."/>
            <person name="Saito K."/>
            <person name="Kawai Y."/>
            <person name="Isono Y."/>
            <person name="Nakamura Y."/>
            <person name="Nagahari K."/>
            <person name="Murakami K."/>
            <person name="Yasuda T."/>
            <person name="Iwayanagi T."/>
            <person name="Wagatsuma M."/>
            <person name="Shiratori A."/>
            <person name="Sudo H."/>
            <person name="Hosoiri T."/>
            <person name="Kaku Y."/>
            <person name="Kodaira H."/>
            <person name="Kondo H."/>
            <person name="Sugawara M."/>
            <person name="Takahashi M."/>
            <person name="Kanda K."/>
            <person name="Yokoi T."/>
            <person name="Furuya T."/>
            <person name="Kikkawa E."/>
            <person name="Omura Y."/>
            <person name="Abe K."/>
            <person name="Kamihara K."/>
            <person name="Katsuta N."/>
            <person name="Sato K."/>
            <person name="Tanikawa M."/>
            <person name="Yamazaki M."/>
            <person name="Ninomiya K."/>
            <person name="Ishibashi T."/>
            <person name="Yamashita H."/>
            <person name="Murakawa K."/>
            <person name="Fujimori K."/>
            <person name="Tanai H."/>
            <person name="Kimata M."/>
            <person name="Watanabe M."/>
            <person name="Hiraoka S."/>
            <person name="Chiba Y."/>
            <person name="Ishida S."/>
            <person name="Ono Y."/>
            <person name="Takiguchi S."/>
            <person name="Watanabe S."/>
            <person name="Yosida M."/>
            <person name="Hotuta T."/>
            <person name="Kusano J."/>
            <person name="Kanehori K."/>
            <person name="Takahashi-Fujii A."/>
            <person name="Hara H."/>
            <person name="Tanase T.-O."/>
            <person name="Nomura Y."/>
            <person name="Togiya S."/>
            <person name="Komai F."/>
            <person name="Hara R."/>
            <person name="Takeuchi K."/>
            <person name="Arita M."/>
            <person name="Imose N."/>
            <person name="Musashino K."/>
            <person name="Yuuki H."/>
            <person name="Oshima A."/>
            <person name="Sasaki N."/>
            <person name="Aotsuka S."/>
            <person name="Yoshikawa Y."/>
            <person name="Matsunawa H."/>
            <person name="Ichihara T."/>
            <person name="Shiohata N."/>
            <person name="Sano S."/>
            <person name="Moriya S."/>
            <person name="Momiyama H."/>
            <person name="Satoh N."/>
            <person name="Takami S."/>
            <person name="Terashima Y."/>
            <person name="Suzuki O."/>
            <person name="Nakagawa S."/>
            <person name="Senoh A."/>
            <person name="Mizoguchi H."/>
            <person name="Goto Y."/>
            <person name="Shimizu F."/>
            <person name="Wakebe H."/>
            <person name="Hishigaki H."/>
            <person name="Watanabe T."/>
            <person name="Sugiyama A."/>
            <person name="Takemoto M."/>
            <person name="Kawakami B."/>
            <person name="Yamazaki M."/>
            <person name="Watanabe K."/>
            <person name="Kumagai A."/>
            <person name="Itakura S."/>
            <person name="Fukuzumi Y."/>
            <person name="Fujimori Y."/>
            <person name="Komiyama M."/>
            <person name="Tashiro H."/>
            <person name="Tanigami A."/>
            <person name="Fujiwara T."/>
            <person name="Ono T."/>
            <person name="Yamada K."/>
            <person name="Fujii Y."/>
            <person name="Ozaki K."/>
            <person name="Hirao M."/>
            <person name="Ohmori Y."/>
            <person name="Kawabata A."/>
            <person name="Hikiji T."/>
            <person name="Kobatake N."/>
            <person name="Inagaki H."/>
            <person name="Ikema Y."/>
            <person name="Okamoto S."/>
            <person name="Okitani R."/>
            <person name="Kawakami T."/>
            <person name="Noguchi S."/>
            <person name="Itoh T."/>
            <person name="Shigeta K."/>
            <person name="Senba T."/>
            <person name="Matsumura K."/>
            <person name="Nakajima Y."/>
            <person name="Mizuno T."/>
            <person name="Morinaga M."/>
            <person name="Sasaki M."/>
            <person name="Togashi T."/>
            <person name="Oyama M."/>
            <person name="Hata H."/>
            <person name="Watanabe M."/>
            <person name="Komatsu T."/>
            <person name="Mizushima-Sugano J."/>
            <person name="Satoh T."/>
            <person name="Shirai Y."/>
            <person name="Takahashi Y."/>
            <person name="Nakagawa K."/>
            <person name="Okumura K."/>
            <person name="Nagase T."/>
            <person name="Nomura N."/>
            <person name="Kikuchi H."/>
            <person name="Masuho Y."/>
            <person name="Yamashita R."/>
            <person name="Nakai K."/>
            <person name="Yada T."/>
            <person name="Nakamura Y."/>
            <person name="Ohara O."/>
            <person name="Isogai T."/>
            <person name="Sugano S."/>
        </authorList>
    </citation>
    <scope>NUCLEOTIDE SEQUENCE [LARGE SCALE MRNA] (ISOFORM 1)</scope>
    <source>
        <tissue>Testis</tissue>
    </source>
</reference>
<reference key="2">
    <citation type="journal article" date="2006" name="Nature">
        <title>The DNA sequence and biological annotation of human chromosome 1.</title>
        <authorList>
            <person name="Gregory S.G."/>
            <person name="Barlow K.F."/>
            <person name="McLay K.E."/>
            <person name="Kaul R."/>
            <person name="Swarbreck D."/>
            <person name="Dunham A."/>
            <person name="Scott C.E."/>
            <person name="Howe K.L."/>
            <person name="Woodfine K."/>
            <person name="Spencer C.C.A."/>
            <person name="Jones M.C."/>
            <person name="Gillson C."/>
            <person name="Searle S."/>
            <person name="Zhou Y."/>
            <person name="Kokocinski F."/>
            <person name="McDonald L."/>
            <person name="Evans R."/>
            <person name="Phillips K."/>
            <person name="Atkinson A."/>
            <person name="Cooper R."/>
            <person name="Jones C."/>
            <person name="Hall R.E."/>
            <person name="Andrews T.D."/>
            <person name="Lloyd C."/>
            <person name="Ainscough R."/>
            <person name="Almeida J.P."/>
            <person name="Ambrose K.D."/>
            <person name="Anderson F."/>
            <person name="Andrew R.W."/>
            <person name="Ashwell R.I.S."/>
            <person name="Aubin K."/>
            <person name="Babbage A.K."/>
            <person name="Bagguley C.L."/>
            <person name="Bailey J."/>
            <person name="Beasley H."/>
            <person name="Bethel G."/>
            <person name="Bird C.P."/>
            <person name="Bray-Allen S."/>
            <person name="Brown J.Y."/>
            <person name="Brown A.J."/>
            <person name="Buckley D."/>
            <person name="Burton J."/>
            <person name="Bye J."/>
            <person name="Carder C."/>
            <person name="Chapman J.C."/>
            <person name="Clark S.Y."/>
            <person name="Clarke G."/>
            <person name="Clee C."/>
            <person name="Cobley V."/>
            <person name="Collier R.E."/>
            <person name="Corby N."/>
            <person name="Coville G.J."/>
            <person name="Davies J."/>
            <person name="Deadman R."/>
            <person name="Dunn M."/>
            <person name="Earthrowl M."/>
            <person name="Ellington A.G."/>
            <person name="Errington H."/>
            <person name="Frankish A."/>
            <person name="Frankland J."/>
            <person name="French L."/>
            <person name="Garner P."/>
            <person name="Garnett J."/>
            <person name="Gay L."/>
            <person name="Ghori M.R.J."/>
            <person name="Gibson R."/>
            <person name="Gilby L.M."/>
            <person name="Gillett W."/>
            <person name="Glithero R.J."/>
            <person name="Grafham D.V."/>
            <person name="Griffiths C."/>
            <person name="Griffiths-Jones S."/>
            <person name="Grocock R."/>
            <person name="Hammond S."/>
            <person name="Harrison E.S.I."/>
            <person name="Hart E."/>
            <person name="Haugen E."/>
            <person name="Heath P.D."/>
            <person name="Holmes S."/>
            <person name="Holt K."/>
            <person name="Howden P.J."/>
            <person name="Hunt A.R."/>
            <person name="Hunt S.E."/>
            <person name="Hunter G."/>
            <person name="Isherwood J."/>
            <person name="James R."/>
            <person name="Johnson C."/>
            <person name="Johnson D."/>
            <person name="Joy A."/>
            <person name="Kay M."/>
            <person name="Kershaw J.K."/>
            <person name="Kibukawa M."/>
            <person name="Kimberley A.M."/>
            <person name="King A."/>
            <person name="Knights A.J."/>
            <person name="Lad H."/>
            <person name="Laird G."/>
            <person name="Lawlor S."/>
            <person name="Leongamornlert D.A."/>
            <person name="Lloyd D.M."/>
            <person name="Loveland J."/>
            <person name="Lovell J."/>
            <person name="Lush M.J."/>
            <person name="Lyne R."/>
            <person name="Martin S."/>
            <person name="Mashreghi-Mohammadi M."/>
            <person name="Matthews L."/>
            <person name="Matthews N.S.W."/>
            <person name="McLaren S."/>
            <person name="Milne S."/>
            <person name="Mistry S."/>
            <person name="Moore M.J.F."/>
            <person name="Nickerson T."/>
            <person name="O'Dell C.N."/>
            <person name="Oliver K."/>
            <person name="Palmeiri A."/>
            <person name="Palmer S.A."/>
            <person name="Parker A."/>
            <person name="Patel D."/>
            <person name="Pearce A.V."/>
            <person name="Peck A.I."/>
            <person name="Pelan S."/>
            <person name="Phelps K."/>
            <person name="Phillimore B.J."/>
            <person name="Plumb R."/>
            <person name="Rajan J."/>
            <person name="Raymond C."/>
            <person name="Rouse G."/>
            <person name="Saenphimmachak C."/>
            <person name="Sehra H.K."/>
            <person name="Sheridan E."/>
            <person name="Shownkeen R."/>
            <person name="Sims S."/>
            <person name="Skuce C.D."/>
            <person name="Smith M."/>
            <person name="Steward C."/>
            <person name="Subramanian S."/>
            <person name="Sycamore N."/>
            <person name="Tracey A."/>
            <person name="Tromans A."/>
            <person name="Van Helmond Z."/>
            <person name="Wall M."/>
            <person name="Wallis J.M."/>
            <person name="White S."/>
            <person name="Whitehead S.L."/>
            <person name="Wilkinson J.E."/>
            <person name="Willey D.L."/>
            <person name="Williams H."/>
            <person name="Wilming L."/>
            <person name="Wray P.W."/>
            <person name="Wu Z."/>
            <person name="Coulson A."/>
            <person name="Vaudin M."/>
            <person name="Sulston J.E."/>
            <person name="Durbin R.M."/>
            <person name="Hubbard T."/>
            <person name="Wooster R."/>
            <person name="Dunham I."/>
            <person name="Carter N.P."/>
            <person name="McVean G."/>
            <person name="Ross M.T."/>
            <person name="Harrow J."/>
            <person name="Olson M.V."/>
            <person name="Beck S."/>
            <person name="Rogers J."/>
            <person name="Bentley D.R."/>
        </authorList>
    </citation>
    <scope>NUCLEOTIDE SEQUENCE [LARGE SCALE GENOMIC DNA]</scope>
</reference>
<reference key="3">
    <citation type="journal article" date="2007" name="BMC Genomics">
        <title>The full-ORF clone resource of the German cDNA consortium.</title>
        <authorList>
            <person name="Bechtel S."/>
            <person name="Rosenfelder H."/>
            <person name="Duda A."/>
            <person name="Schmidt C.P."/>
            <person name="Ernst U."/>
            <person name="Wellenreuther R."/>
            <person name="Mehrle A."/>
            <person name="Schuster C."/>
            <person name="Bahr A."/>
            <person name="Bloecker H."/>
            <person name="Heubner D."/>
            <person name="Hoerlein A."/>
            <person name="Michel G."/>
            <person name="Wedler H."/>
            <person name="Koehrer K."/>
            <person name="Ottenwaelder B."/>
            <person name="Poustka A."/>
            <person name="Wiemann S."/>
            <person name="Schupp I."/>
        </authorList>
    </citation>
    <scope>NUCLEOTIDE SEQUENCE [LARGE SCALE MRNA] OF 723-1888 (ISOFORMS 1 AND 2)</scope>
    <source>
        <tissue>Testis</tissue>
    </source>
</reference>
<reference key="4">
    <citation type="journal article" date="2021" name="Hum. Reprod.">
        <title>Defect in the nuclear pore membrane glycoprotein 210-like gene is associated with extreme uncondensed sperm nuclear chromatin and male infertility: a case report.</title>
        <authorList>
            <person name="Arafah K."/>
            <person name="Lopez F."/>
            <person name="Cazin C."/>
            <person name="Kherraf Z.E."/>
            <person name="Tassistro V."/>
            <person name="Loundou A."/>
            <person name="Arnoult C."/>
            <person name="Thierry-Mieg N."/>
            <person name="Bulet P."/>
            <person name="Guichaoua M.R."/>
            <person name="Ray P.F."/>
        </authorList>
    </citation>
    <scope>INVOLVEMENT IN SPG97</scope>
</reference>
<reference key="5">
    <citation type="journal article" date="2024" name="Clin. Genet.">
        <title>Spermatozoa in mice lacking the nucleoporin NUP210L show defects in head shape and motility but not in nuclear compaction or histone replacement.</title>
        <authorList>
            <person name="Al Dala Ali M."/>
            <person name="Longepied G."/>
            <person name="Nicolet A."/>
            <person name="Metzler-Guillemain C."/>
            <person name="Mitchell M.J."/>
        </authorList>
    </citation>
    <scope>INVOLVEMENT IN SPG97</scope>
    <scope>SUBCELLULAR LOCATION</scope>
</reference>
<comment type="subcellular location">
    <subcellularLocation>
        <location evidence="3">Nucleus membrane</location>
        <topology evidence="5">Single-pass membrane protein</topology>
    </subcellularLocation>
    <text evidence="3">In elongating spermatids, localizes to the nuclear periphery and becomes gradually restricted to the posterior pole of the nucleus (PubMed:38129135). In round spermatids, localization differs between human and mouse; in human, it is restricted to the nuclear periphery except under the acrosome, while in mouse, it is nucleoplasmic (PubMed:38129135).</text>
</comment>
<comment type="alternative products">
    <event type="alternative splicing"/>
    <isoform>
        <id>Q5VU65-1</id>
        <name>1</name>
        <sequence type="displayed"/>
    </isoform>
    <isoform>
        <id>Q5VU65-2</id>
        <name>2</name>
        <sequence type="described" ref="VSP_053811"/>
    </isoform>
</comment>
<comment type="disease" evidence="2">
    <disease id="DI-06975">
        <name>Spermatogenic failure 97</name>
        <acronym>SPGF97</acronym>
        <description>An autosomal recessive, male infertility disorder characterized by oligoasthenoteratozoospermia. Infertile subjects have low sperm count, poor motility and highly abnormal spermatozoa with strikingly large heads due to highly uncondensed nuclear sperm DNA.</description>
        <dbReference type="MIM" id="621057"/>
    </disease>
    <text evidence="2 3">The disease may be caused by variants affecting the gene represented in this entry. In a patient with spermatogenic failure, a homozygous loss-of-function variant affecting a splice site in the NUP210L gene has been identified (PubMed:33332558). However, NUP210L knockout male mice show only mild anomalies of sperm head morphology and decreased motility and are fertile (PubMed:38129135). Re-examination of the patient allowed the identification of an additional variant in the NUP153 gene (p.Pro485Leu). It has been proposed that the increased phenotypic severity associated with NUP210L loss in the patient was due to the presence of this additional variant. Although interspecies divergence in the nuclear pore function of NUP210L cannot be ruled out (PubMed:38129135).</text>
</comment>
<comment type="similarity">
    <text evidence="5">Belongs to the NUP210 family.</text>
</comment>
<comment type="sequence caution" evidence="5">
    <conflict type="erroneous initiation">
        <sequence resource="EMBL-CDS" id="BAC86345"/>
    </conflict>
    <text>Truncated N-terminus.</text>
</comment>
<comment type="sequence caution" evidence="5">
    <conflict type="erroneous initiation">
        <sequence resource="EMBL-CDS" id="BAC87279"/>
    </conflict>
    <text>Truncated N-terminus.</text>
</comment>
<comment type="sequence caution" evidence="5">
    <conflict type="erroneous initiation">
        <sequence resource="EMBL-CDS" id="CAB63757"/>
    </conflict>
    <text>Extended N-terminus.</text>
</comment>
<gene>
    <name type="primary">NUP210L</name>
</gene>
<organism>
    <name type="scientific">Homo sapiens</name>
    <name type="common">Human</name>
    <dbReference type="NCBI Taxonomy" id="9606"/>
    <lineage>
        <taxon>Eukaryota</taxon>
        <taxon>Metazoa</taxon>
        <taxon>Chordata</taxon>
        <taxon>Craniata</taxon>
        <taxon>Vertebrata</taxon>
        <taxon>Euteleostomi</taxon>
        <taxon>Mammalia</taxon>
        <taxon>Eutheria</taxon>
        <taxon>Euarchontoglires</taxon>
        <taxon>Primates</taxon>
        <taxon>Haplorrhini</taxon>
        <taxon>Catarrhini</taxon>
        <taxon>Hominidae</taxon>
        <taxon>Homo</taxon>
    </lineage>
</organism>
<proteinExistence type="evidence at protein level"/>
<dbReference type="EMBL" id="AK125924">
    <property type="protein sequence ID" value="BAC86345.1"/>
    <property type="status" value="ALT_INIT"/>
    <property type="molecule type" value="mRNA"/>
</dbReference>
<dbReference type="EMBL" id="AK128000">
    <property type="protein sequence ID" value="BAC87225.1"/>
    <property type="molecule type" value="mRNA"/>
</dbReference>
<dbReference type="EMBL" id="AK128108">
    <property type="protein sequence ID" value="BAC87279.1"/>
    <property type="status" value="ALT_INIT"/>
    <property type="molecule type" value="mRNA"/>
</dbReference>
<dbReference type="EMBL" id="AL590431">
    <property type="status" value="NOT_ANNOTATED_CDS"/>
    <property type="molecule type" value="Genomic_DNA"/>
</dbReference>
<dbReference type="EMBL" id="AL358472">
    <property type="status" value="NOT_ANNOTATED_CDS"/>
    <property type="molecule type" value="Genomic_DNA"/>
</dbReference>
<dbReference type="EMBL" id="AL513546">
    <property type="status" value="NOT_ANNOTATED_CDS"/>
    <property type="molecule type" value="Genomic_DNA"/>
</dbReference>
<dbReference type="EMBL" id="AL833964">
    <property type="protein sequence ID" value="CAD38812.1"/>
    <property type="molecule type" value="mRNA"/>
</dbReference>
<dbReference type="EMBL" id="AL133633">
    <property type="protein sequence ID" value="CAB63757.1"/>
    <property type="status" value="ALT_INIT"/>
    <property type="molecule type" value="mRNA"/>
</dbReference>
<dbReference type="CCDS" id="CCDS41399.1">
    <molecule id="Q5VU65-1"/>
</dbReference>
<dbReference type="CCDS" id="CCDS53370.1">
    <molecule id="Q5VU65-2"/>
</dbReference>
<dbReference type="PIR" id="T43452">
    <property type="entry name" value="T43452"/>
</dbReference>
<dbReference type="RefSeq" id="NP_001152956.1">
    <molecule id="Q5VU65-2"/>
    <property type="nucleotide sequence ID" value="NM_001159484.1"/>
</dbReference>
<dbReference type="RefSeq" id="NP_997191.2">
    <molecule id="Q5VU65-1"/>
    <property type="nucleotide sequence ID" value="NM_207308.3"/>
</dbReference>
<dbReference type="SMR" id="Q5VU65"/>
<dbReference type="BioGRID" id="124804">
    <property type="interactions" value="4"/>
</dbReference>
<dbReference type="FunCoup" id="Q5VU65">
    <property type="interactions" value="179"/>
</dbReference>
<dbReference type="STRING" id="9606.ENSP00000357547"/>
<dbReference type="GlyCosmos" id="Q5VU65">
    <property type="glycosylation" value="9 sites, No reported glycans"/>
</dbReference>
<dbReference type="GlyGen" id="Q5VU65">
    <property type="glycosylation" value="13 sites, 2 O-linked glycans (4 sites)"/>
</dbReference>
<dbReference type="iPTMnet" id="Q5VU65"/>
<dbReference type="PhosphoSitePlus" id="Q5VU65"/>
<dbReference type="BioMuta" id="NUP210L"/>
<dbReference type="DMDM" id="74747057"/>
<dbReference type="MassIVE" id="Q5VU65"/>
<dbReference type="PaxDb" id="9606-ENSP00000357547"/>
<dbReference type="PeptideAtlas" id="Q5VU65"/>
<dbReference type="ProteomicsDB" id="17287"/>
<dbReference type="ProteomicsDB" id="65391">
    <molecule id="Q5VU65-1"/>
</dbReference>
<dbReference type="Antibodypedia" id="77096">
    <property type="antibodies" value="33 antibodies from 14 providers"/>
</dbReference>
<dbReference type="DNASU" id="91181"/>
<dbReference type="Ensembl" id="ENST00000271854.3">
    <molecule id="Q5VU65-2"/>
    <property type="protein sequence ID" value="ENSP00000271854.3"/>
    <property type="gene ID" value="ENSG00000143552.10"/>
</dbReference>
<dbReference type="Ensembl" id="ENST00000368559.8">
    <molecule id="Q5VU65-1"/>
    <property type="protein sequence ID" value="ENSP00000357547.3"/>
    <property type="gene ID" value="ENSG00000143552.10"/>
</dbReference>
<dbReference type="GeneID" id="91181"/>
<dbReference type="KEGG" id="hsa:91181"/>
<dbReference type="MANE-Select" id="ENST00000368559.8">
    <property type="protein sequence ID" value="ENSP00000357547.3"/>
    <property type="RefSeq nucleotide sequence ID" value="NM_207308.3"/>
    <property type="RefSeq protein sequence ID" value="NP_997191.2"/>
</dbReference>
<dbReference type="UCSC" id="uc001fdw.4">
    <molecule id="Q5VU65-1"/>
    <property type="organism name" value="human"/>
</dbReference>
<dbReference type="AGR" id="HGNC:29915"/>
<dbReference type="CTD" id="91181"/>
<dbReference type="DisGeNET" id="91181"/>
<dbReference type="GeneCards" id="NUP210L"/>
<dbReference type="HGNC" id="HGNC:29915">
    <property type="gene designation" value="NUP210L"/>
</dbReference>
<dbReference type="HPA" id="ENSG00000143552">
    <property type="expression patterns" value="Tissue enriched (testis)"/>
</dbReference>
<dbReference type="MIM" id="621033">
    <property type="type" value="gene"/>
</dbReference>
<dbReference type="MIM" id="621057">
    <property type="type" value="phenotype"/>
</dbReference>
<dbReference type="neXtProt" id="NX_Q5VU65"/>
<dbReference type="OpenTargets" id="ENSG00000143552"/>
<dbReference type="PharmGKB" id="PA134984604"/>
<dbReference type="VEuPathDB" id="HostDB:ENSG00000143552"/>
<dbReference type="eggNOG" id="KOG1833">
    <property type="taxonomic scope" value="Eukaryota"/>
</dbReference>
<dbReference type="GeneTree" id="ENSGT00390000009491"/>
<dbReference type="HOGENOM" id="CLU_001205_1_1_1"/>
<dbReference type="InParanoid" id="Q5VU65"/>
<dbReference type="OMA" id="WYSTRHD"/>
<dbReference type="OrthoDB" id="361283at2759"/>
<dbReference type="PAN-GO" id="Q5VU65">
    <property type="GO annotations" value="1 GO annotation based on evolutionary models"/>
</dbReference>
<dbReference type="PhylomeDB" id="Q5VU65"/>
<dbReference type="TreeFam" id="TF313331"/>
<dbReference type="PathwayCommons" id="Q5VU65"/>
<dbReference type="BioGRID-ORCS" id="91181">
    <property type="hits" value="8 hits in 1145 CRISPR screens"/>
</dbReference>
<dbReference type="CD-CODE" id="91857CE7">
    <property type="entry name" value="Nucleolus"/>
</dbReference>
<dbReference type="ChiTaRS" id="NUP210L">
    <property type="organism name" value="human"/>
</dbReference>
<dbReference type="GenomeRNAi" id="91181"/>
<dbReference type="Pharos" id="Q5VU65">
    <property type="development level" value="Tdark"/>
</dbReference>
<dbReference type="PRO" id="PR:Q5VU65"/>
<dbReference type="Proteomes" id="UP000005640">
    <property type="component" value="Chromosome 1"/>
</dbReference>
<dbReference type="RNAct" id="Q5VU65">
    <property type="molecule type" value="protein"/>
</dbReference>
<dbReference type="Bgee" id="ENSG00000143552">
    <property type="expression patterns" value="Expressed in sperm and 96 other cell types or tissues"/>
</dbReference>
<dbReference type="ExpressionAtlas" id="Q5VU65">
    <property type="expression patterns" value="baseline and differential"/>
</dbReference>
<dbReference type="GO" id="GO:0016020">
    <property type="term" value="C:membrane"/>
    <property type="evidence" value="ECO:0007669"/>
    <property type="project" value="UniProtKB-SubCell"/>
</dbReference>
<dbReference type="GO" id="GO:0005643">
    <property type="term" value="C:nuclear pore"/>
    <property type="evidence" value="ECO:0000318"/>
    <property type="project" value="GO_Central"/>
</dbReference>
<dbReference type="GO" id="GO:0060009">
    <property type="term" value="P:Sertoli cell development"/>
    <property type="evidence" value="ECO:0007669"/>
    <property type="project" value="Ensembl"/>
</dbReference>
<dbReference type="GO" id="GO:0007286">
    <property type="term" value="P:spermatid development"/>
    <property type="evidence" value="ECO:0007669"/>
    <property type="project" value="Ensembl"/>
</dbReference>
<dbReference type="Gene3D" id="2.60.40.1080">
    <property type="match status" value="1"/>
</dbReference>
<dbReference type="InterPro" id="IPR003343">
    <property type="entry name" value="Big_2"/>
</dbReference>
<dbReference type="InterPro" id="IPR056897">
    <property type="entry name" value="Ig_NUP210_4th"/>
</dbReference>
<dbReference type="InterPro" id="IPR056898">
    <property type="entry name" value="Ig_NUP210_6th"/>
</dbReference>
<dbReference type="InterPro" id="IPR056899">
    <property type="entry name" value="Ig_NUP210_9th"/>
</dbReference>
<dbReference type="InterPro" id="IPR008964">
    <property type="entry name" value="Invasin/intimin_cell_adhesion"/>
</dbReference>
<dbReference type="InterPro" id="IPR045197">
    <property type="entry name" value="NUP210-like"/>
</dbReference>
<dbReference type="InterPro" id="IPR055096">
    <property type="entry name" value="NUP210_Ig1"/>
</dbReference>
<dbReference type="InterPro" id="IPR055094">
    <property type="entry name" value="NUP210_Ig15"/>
</dbReference>
<dbReference type="InterPro" id="IPR055097">
    <property type="entry name" value="NUP210_Ig2"/>
</dbReference>
<dbReference type="InterPro" id="IPR055098">
    <property type="entry name" value="NUP210_Ig3"/>
</dbReference>
<dbReference type="InterPro" id="IPR055099">
    <property type="entry name" value="NUP210_Ig7"/>
</dbReference>
<dbReference type="InterPro" id="IPR055095">
    <property type="entry name" value="NUP210_Ig_C"/>
</dbReference>
<dbReference type="PANTHER" id="PTHR23019:SF1">
    <property type="entry name" value="NUCLEAR PORE MEMBRANE GLYCOPROTEIN 210-LIKE"/>
    <property type="match status" value="1"/>
</dbReference>
<dbReference type="PANTHER" id="PTHR23019">
    <property type="entry name" value="NUCLEAR PORE MEMBRANE GLYCOPROTEIN GP210-RELATED"/>
    <property type="match status" value="1"/>
</dbReference>
<dbReference type="Pfam" id="PF02368">
    <property type="entry name" value="Big_2"/>
    <property type="match status" value="1"/>
</dbReference>
<dbReference type="Pfam" id="PF22959">
    <property type="entry name" value="Ig_NUP210_15th"/>
    <property type="match status" value="1"/>
</dbReference>
<dbReference type="Pfam" id="PF25354">
    <property type="entry name" value="Ig_NUP210_16th"/>
    <property type="match status" value="1"/>
</dbReference>
<dbReference type="Pfam" id="PF22967">
    <property type="entry name" value="Ig_NUP210_1st"/>
    <property type="match status" value="1"/>
</dbReference>
<dbReference type="Pfam" id="PF22969">
    <property type="entry name" value="Ig_NUP210_2nd"/>
    <property type="match status" value="1"/>
</dbReference>
<dbReference type="Pfam" id="PF22963">
    <property type="entry name" value="Ig_NUP210_3rd"/>
    <property type="match status" value="1"/>
</dbReference>
<dbReference type="Pfam" id="PF24991">
    <property type="entry name" value="Ig_NUP210_4th"/>
    <property type="match status" value="1"/>
</dbReference>
<dbReference type="Pfam" id="PF24935">
    <property type="entry name" value="Ig_NUP210_6th"/>
    <property type="match status" value="1"/>
</dbReference>
<dbReference type="Pfam" id="PF22962">
    <property type="entry name" value="Ig_NUP210_7th"/>
    <property type="match status" value="1"/>
</dbReference>
<dbReference type="Pfam" id="PF24902">
    <property type="entry name" value="Ig_NUP210_9th"/>
    <property type="match status" value="1"/>
</dbReference>
<dbReference type="Pfam" id="PF22957">
    <property type="entry name" value="NUP210_Ig"/>
    <property type="match status" value="1"/>
</dbReference>
<dbReference type="SMART" id="SM00635">
    <property type="entry name" value="BID_2"/>
    <property type="match status" value="1"/>
</dbReference>
<dbReference type="SUPFAM" id="SSF49373">
    <property type="entry name" value="Invasin/intimin cell-adhesion fragments"/>
    <property type="match status" value="2"/>
</dbReference>
<evidence type="ECO:0000255" key="1"/>
<evidence type="ECO:0000269" key="2">
    <source>
    </source>
</evidence>
<evidence type="ECO:0000269" key="3">
    <source>
    </source>
</evidence>
<evidence type="ECO:0000303" key="4">
    <source>
    </source>
</evidence>
<evidence type="ECO:0000305" key="5"/>
<name>P210L_HUMAN</name>
<feature type="signal peptide" evidence="1">
    <location>
        <begin position="1"/>
        <end position="35"/>
    </location>
</feature>
<feature type="chain" id="PRO_0000236048" description="Nuclear pore membrane glycoprotein 210-like">
    <location>
        <begin position="36"/>
        <end position="1888"/>
    </location>
</feature>
<feature type="transmembrane region" description="Helical" evidence="1">
    <location>
        <begin position="1813"/>
        <end position="1833"/>
    </location>
</feature>
<feature type="domain" description="BIG2" evidence="1">
    <location>
        <begin position="1082"/>
        <end position="1154"/>
    </location>
</feature>
<feature type="glycosylation site" description="N-linked (GlcNAc...) asparagine" evidence="1">
    <location>
        <position position="84"/>
    </location>
</feature>
<feature type="glycosylation site" description="N-linked (GlcNAc...) asparagine" evidence="1">
    <location>
        <position position="304"/>
    </location>
</feature>
<feature type="glycosylation site" description="N-linked (GlcNAc...) asparagine" evidence="1">
    <location>
        <position position="348"/>
    </location>
</feature>
<feature type="glycosylation site" description="N-linked (GlcNAc...) asparagine" evidence="1">
    <location>
        <position position="495"/>
    </location>
</feature>
<feature type="glycosylation site" description="N-linked (GlcNAc...) asparagine" evidence="1">
    <location>
        <position position="522"/>
    </location>
</feature>
<feature type="glycosylation site" description="N-linked (GlcNAc...) asparagine" evidence="1">
    <location>
        <position position="812"/>
    </location>
</feature>
<feature type="glycosylation site" description="N-linked (GlcNAc...) asparagine" evidence="1">
    <location>
        <position position="931"/>
    </location>
</feature>
<feature type="glycosylation site" description="N-linked (GlcNAc...) asparagine" evidence="1">
    <location>
        <position position="1445"/>
    </location>
</feature>
<feature type="glycosylation site" description="N-linked (GlcNAc...) asparagine" evidence="1">
    <location>
        <position position="1859"/>
    </location>
</feature>
<feature type="splice variant" id="VSP_053811" description="In isoform 2." evidence="4">
    <location>
        <begin position="1644"/>
        <end position="1795"/>
    </location>
</feature>
<feature type="sequence variant" id="VAR_050574" description="In dbSNP:rs11264875.">
    <original>V</original>
    <variation>I</variation>
    <location>
        <position position="1491"/>
    </location>
</feature>
<feature type="sequence conflict" description="In Ref. 1; BAC87225." evidence="5" ref="1">
    <original>T</original>
    <variation>A</variation>
    <location>
        <position position="318"/>
    </location>
</feature>
<feature type="sequence conflict" description="In Ref. 1; BAC87225." evidence="5" ref="1">
    <original>V</original>
    <variation>I</variation>
    <location>
        <position position="506"/>
    </location>
</feature>
<feature type="sequence conflict" description="In Ref. 1; BAC86345." evidence="5" ref="1">
    <original>D</original>
    <variation>G</variation>
    <location>
        <position position="843"/>
    </location>
</feature>
<feature type="sequence conflict" description="In Ref. 1; BAC87279." evidence="5" ref="1">
    <original>D</original>
    <variation>G</variation>
    <location>
        <position position="898"/>
    </location>
</feature>
<feature type="sequence conflict" description="In Ref. 1; BAC87279." evidence="5" ref="1">
    <original>R</original>
    <variation>K</variation>
    <location>
        <position position="1005"/>
    </location>
</feature>
<feature type="sequence conflict" description="In Ref. 1; BAC87279." evidence="5" ref="1">
    <original>Q</original>
    <variation>R</variation>
    <location>
        <position position="1686"/>
    </location>
</feature>
<feature type="sequence conflict" description="In Ref. 1; BAC86345." evidence="5" ref="1">
    <original>N</original>
    <variation>S</variation>
    <location>
        <position position="1833"/>
    </location>
</feature>
<feature type="sequence conflict" description="In Ref. 1; BAC86345." evidence="5" ref="1">
    <original>FNSTSSPPHFMSLQP</original>
    <variation>LTPQVLPLTS</variation>
    <location>
        <begin position="1858"/>
        <end position="1872"/>
    </location>
</feature>
<sequence>MTGCPASSRRRGFGLFFFLRLHRLLLLFLVLRGTLANKLNVPQVLLPFGREPGRVPFLLEAQRGCYTWHSTHHDAVTVEPLYENGTLCSQKAVLIAESTQPIRLSSIILAREIVTDHELRCDVKVDVINSIEIVSRARELYVDDSPLELMVRALDAEGNTFSSLAGMMFEWSIAQDNESAREELSSKIRILKYSEAEYAPPIYIAEMEKEEKQGDVILVSGIRTGAAVVKVRIHEPFYKKVAAALIRLLVLENIFLIPSHDIYLLVGTYIKYQVAKMVQGRVTEVKFPLEHYILELQDHRVALNGSHSEKVAILDDKTAMVTASQLGQTNLVFVHKNVHMRSVSGLPNCTIYVVEPGFLGFTVQPGNRWSLEVGQVYVITVDVFDKSSTKVYISDNLRITYDFPKEYFEEQLTTVNGSYHIVKALKDGVVVINASLTSIIYQNKDIQPIKFLIKHQQEVKIYFPIMLTPKFLAFPHHPMGMLYRYKVQVEGGSGNFTWTSSNETVVIVTTKGVVTAGQVRGNSTVLARDVQNPFRYGEIKIHVLKLNKMELLPFHADVEIGQIIEIPIAMYHINKETKEAMAFTDCSHLSLDLNMDKQGVFTLLKEGIQRPGPMHCSSTHIAAKSLGHTLVTVSVNECDKYLESSATFAAYEPLKALNPVEVALVTWQSVKEMVFEGGPRPWILEPSRFFLELNAEKTEKIGIAQVWLPSKRKQNQYIYRIQCLDLGEQVLTFRIGNHPGVLNPSPAVEVLQVRFICAHPASMSVTPVYKVPAGAQPCPLPQHNKWLIPVSRLRDTVLELAVFDQHRRKFDNFSSLMLEWKSSNETLAHFEDYKSVEMVAKDDGSGQTRLHGHQILKVHQIKGTVLIGVNFVGYSEKKSPKEISNLPRSVDVELLLVDDVTVVPENATIYNHPDVKETFSLVEGSGYFLVNSSEQGVVTITYMEAESSVELVPLHPGFFTLEVYDLCLAFLGPATAHLRVSDIQELELDLIDKVEIDKTVLVTVRVLGSSKRPFQNKYFRNMELKLQLASAIVTLTPMEQQDEYSENYILRATTIGQTTLVAIAKDKMGRKYTSTPRHIEVFPPFRLLPEKMTLIPMNMMQVMSEGGPQPQSIVHFSISNQTVAVVNRRGQVTGKIVGTAVVHGTIQTVNEDTGKVIVFSQDEVQIEVVQLRAVRILAAATRLITATKMPVYVMGVTSTQTPFSFSNANPGLTFHWSMSKRDVLDLVPRHSEVFLQLPVEHNFAMVVHTKAAGRTSIKVTVHCMNSSSGQFEGNLLELSDEVQILVFEKLQLFYPECQPEQILMPINSQLKLHTNREGAAFVSSRVLKCFPNSSVIEEDGEGLLKAGSIAGTAVLEVTSIEPFGVNQTTITGVQVAPVTYLRVSSQPKLYTAQGRTLSAFPLGMSLTFTVQFYNSIGEKFHTHNTQLYLALNRDDLLHIGPGNKNYTYMAQAVNRGLTLVGLWDRRHPGMADYIPVAVEHAIEPDTKLTFVGDIICFSTHLVSQHGEPGIWMISANNILQTDIVTGVGVARSPGTAMIFHDIPGVVKTYREVVVNASSRLMLSYDLKTYLTNTLNSTVFKLFITTGRNGVNLKGFCTPNQALAITKVLLPATLMLCHVQFSNTLLDIPASKVFQVHSDFSMEKGVYVCIIKVRPQSEELLQALSVADTSVYGWATLVSERSKNGMQRILIPFIPAFYINQSELVLSHKQDIGEIRVLGVDRVLRKLEVISSSPVLVVAGHSHSPLTPGLAIYSVRVVNFTSFQQMASPVFINISCVLTSQSEAVVVRAMKDKLGADHCEDSAILKRFTGSYQILLLTLFAVLASTASIFLAYNAFLNKIQTVPVVYVPTLGTPQPGFFNSTSSPPHFMSLQPPLAQSRLQHWLWSIRH</sequence>
<keyword id="KW-0025">Alternative splicing</keyword>
<keyword id="KW-0325">Glycoprotein</keyword>
<keyword id="KW-0472">Membrane</keyword>
<keyword id="KW-0539">Nucleus</keyword>
<keyword id="KW-1267">Proteomics identification</keyword>
<keyword id="KW-1185">Reference proteome</keyword>
<keyword id="KW-0732">Signal</keyword>
<keyword id="KW-0812">Transmembrane</keyword>
<keyword id="KW-1133">Transmembrane helix</keyword>